<protein>
    <recommendedName>
        <fullName evidence="1">Non-structural protein 1</fullName>
        <shortName evidence="1">NS1</shortName>
    </recommendedName>
    <alternativeName>
        <fullName evidence="1">NS1A</fullName>
    </alternativeName>
</protein>
<feature type="chain" id="PRO_0000078924" description="Non-structural protein 1">
    <location>
        <begin position="1"/>
        <end position="217"/>
    </location>
</feature>
<feature type="region of interest" description="RNA-binding and homodimerization" evidence="1">
    <location>
        <begin position="1"/>
        <end position="73"/>
    </location>
</feature>
<feature type="region of interest" description="CPSF4-binding" evidence="1">
    <location>
        <begin position="180"/>
        <end position="215"/>
    </location>
</feature>
<feature type="short sequence motif" description="Nuclear localization signal" evidence="1">
    <location>
        <begin position="34"/>
        <end position="38"/>
    </location>
</feature>
<feature type="short sequence motif" description="Nuclear export signal" evidence="1">
    <location>
        <begin position="137"/>
        <end position="146"/>
    </location>
</feature>
<dbReference type="EMBL" id="U96739">
    <property type="protein sequence ID" value="AAB93938.1"/>
    <property type="molecule type" value="Genomic_RNA"/>
</dbReference>
<dbReference type="EMBL" id="CY015112">
    <property type="protein sequence ID" value="ABI85150.1"/>
    <property type="molecule type" value="Genomic_RNA"/>
</dbReference>
<dbReference type="SMR" id="O57268"/>
<dbReference type="Proteomes" id="UP000105783">
    <property type="component" value="Genome"/>
</dbReference>
<dbReference type="GO" id="GO:0030430">
    <property type="term" value="C:host cell cytoplasm"/>
    <property type="evidence" value="ECO:0007669"/>
    <property type="project" value="UniProtKB-SubCell"/>
</dbReference>
<dbReference type="GO" id="GO:0042025">
    <property type="term" value="C:host cell nucleus"/>
    <property type="evidence" value="ECO:0007669"/>
    <property type="project" value="UniProtKB-SubCell"/>
</dbReference>
<dbReference type="GO" id="GO:0030291">
    <property type="term" value="F:protein serine/threonine kinase inhibitor activity"/>
    <property type="evidence" value="ECO:0007669"/>
    <property type="project" value="UniProtKB-KW"/>
</dbReference>
<dbReference type="GO" id="GO:0003723">
    <property type="term" value="F:RNA binding"/>
    <property type="evidence" value="ECO:0007669"/>
    <property type="project" value="UniProtKB-KW"/>
</dbReference>
<dbReference type="GO" id="GO:0039540">
    <property type="term" value="P:symbiont-mediated suppression of host cytoplasmic pattern recognition receptor signaling pathway via inhibition of RIG-I activity"/>
    <property type="evidence" value="ECO:0007669"/>
    <property type="project" value="UniProtKB-KW"/>
</dbReference>
<dbReference type="GO" id="GO:0039657">
    <property type="term" value="P:symbiont-mediated suppression of host gene expression"/>
    <property type="evidence" value="ECO:0007669"/>
    <property type="project" value="UniProtKB-KW"/>
</dbReference>
<dbReference type="GO" id="GO:0039524">
    <property type="term" value="P:symbiont-mediated suppression of host mRNA processing"/>
    <property type="evidence" value="ECO:0007669"/>
    <property type="project" value="UniProtKB-KW"/>
</dbReference>
<dbReference type="GO" id="GO:0039580">
    <property type="term" value="P:symbiont-mediated suppression of host PKR/eIFalpha signaling"/>
    <property type="evidence" value="ECO:0007669"/>
    <property type="project" value="UniProtKB-KW"/>
</dbReference>
<dbReference type="GO" id="GO:0039502">
    <property type="term" value="P:symbiont-mediated suppression of host type I interferon-mediated signaling pathway"/>
    <property type="evidence" value="ECO:0007669"/>
    <property type="project" value="UniProtKB-KW"/>
</dbReference>
<dbReference type="FunFam" id="1.10.287.10:FF:000001">
    <property type="entry name" value="Non-structural protein 1"/>
    <property type="match status" value="1"/>
</dbReference>
<dbReference type="Gene3D" id="3.30.420.330">
    <property type="entry name" value="Influenza virus non-structural protein, effector domain"/>
    <property type="match status" value="1"/>
</dbReference>
<dbReference type="Gene3D" id="1.10.287.10">
    <property type="entry name" value="S15/NS1, RNA-binding"/>
    <property type="match status" value="1"/>
</dbReference>
<dbReference type="HAMAP" id="MF_04066">
    <property type="entry name" value="INFV_NS1"/>
    <property type="match status" value="1"/>
</dbReference>
<dbReference type="InterPro" id="IPR004208">
    <property type="entry name" value="NS1"/>
</dbReference>
<dbReference type="InterPro" id="IPR000256">
    <property type="entry name" value="NS1A"/>
</dbReference>
<dbReference type="InterPro" id="IPR038064">
    <property type="entry name" value="NS1A_effect_dom-like_sf"/>
</dbReference>
<dbReference type="InterPro" id="IPR009068">
    <property type="entry name" value="uS15_NS1_RNA-bd_sf"/>
</dbReference>
<dbReference type="Pfam" id="PF00600">
    <property type="entry name" value="Flu_NS1"/>
    <property type="match status" value="1"/>
</dbReference>
<dbReference type="SUPFAM" id="SSF143021">
    <property type="entry name" value="Ns1 effector domain-like"/>
    <property type="match status" value="1"/>
</dbReference>
<dbReference type="SUPFAM" id="SSF47060">
    <property type="entry name" value="S15/NS1 RNA-binding domain"/>
    <property type="match status" value="1"/>
</dbReference>
<evidence type="ECO:0000255" key="1">
    <source>
        <dbReference type="HAMAP-Rule" id="MF_04066"/>
    </source>
</evidence>
<proteinExistence type="inferred from homology"/>
<gene>
    <name evidence="1" type="primary">NS</name>
</gene>
<sequence length="217" mass="24340">MDSNTVSSFQVDCFLWHVRKRFADQELGDAPFLDRLRRDQKSLRGRGSTLGLDIETATSAGKQIVERILEEESDEALKMTIASVPVSRYLTDMTLEEMSRDWFMLMPKQKVAGSLCIRMDQAIMDKKIILKANFSVIFGRLETLILLRAFTEEGAIVGEISPLPSLPGHTDEDVKNAIGVLIGGLKWNDNTVRVSEALQRFAWKGSNENGRPPLPSK</sequence>
<name>NS1_I83A6</name>
<organism>
    <name type="scientific">Influenza A virus (strain A/Chicken/Pennsylvania/1370/1983 H5N2)</name>
    <dbReference type="NCBI Taxonomy" id="385617"/>
    <lineage>
        <taxon>Viruses</taxon>
        <taxon>Riboviria</taxon>
        <taxon>Orthornavirae</taxon>
        <taxon>Negarnaviricota</taxon>
        <taxon>Polyploviricotina</taxon>
        <taxon>Insthoviricetes</taxon>
        <taxon>Articulavirales</taxon>
        <taxon>Orthomyxoviridae</taxon>
        <taxon>Alphainfluenzavirus</taxon>
        <taxon>Alphainfluenzavirus influenzae</taxon>
        <taxon>Influenza A virus</taxon>
    </lineage>
</organism>
<accession>O57268</accession>
<accession>Q0A2D1</accession>
<comment type="function">
    <text evidence="1">Inhibits post-transcriptional processing of cellular pre-mRNA, by binding and inhibiting two cellular proteins that are required for the 3'-end processing of cellular pre-mRNAs: the 30 kDa cleavage and polyadenylation specificity factor/CPSF4 and the poly(A)-binding protein 2/PABPN1. In turn, unprocessed 3' end pre-mRNAs accumulate in the host nucleus and are no longer exported to the cytoplasm. Cellular protein synthesis is thereby shut off very early after virus infection. Viral protein synthesis is not affected by the inhibition of the cellular 3' end processing machinery because the poly(A) tails of viral mRNAs are produced by the viral polymerase through a stuttering mechanism. Prevents the establishment of the cellular antiviral state by inhibiting TRIM25-mediated RIGI ubiquitination, which normally triggers the antiviral transduction signal that leads to the activation of type I IFN genes by transcription factors IRF3 and IRF7. Also binds poly(A) and U6 snRNA. Inhibits the integrated stress response (ISR) in the infected cell by blocking dsRNA binding by EIF2AK2/PKR and further phosphorylation of EIF2S1/EIF-2ALPHA. Stress granule formation is thus inhibited, which allows protein synthesis and viral replication.</text>
</comment>
<comment type="subunit">
    <text evidence="1">Homodimer. Interacts with host TRIM25 (via coiled coil); this interaction specifically inhibits TRIM25 multimerization and TRIM25-mediated RIGI CARD ubiquitination. Interacts with human EIF2AK2/PKR, CPSF4, IVNS1ABP and PABPN1.</text>
</comment>
<comment type="subcellular location">
    <subcellularLocation>
        <location evidence="1">Host nucleus</location>
    </subcellularLocation>
    <subcellularLocation>
        <location evidence="1">Host cytoplasm</location>
    </subcellularLocation>
    <text evidence="1">In uninfected, transfected cells, NS1 is localized in the nucleus. Only in virus infected cells, the nuclear export signal is unveiled, presumably by a viral protein, and a fraction of NS1 is exported in the cytoplasm.</text>
</comment>
<comment type="alternative products">
    <event type="alternative splicing"/>
    <isoform>
        <id>O57268-1</id>
        <name>NS1</name>
        <sequence type="displayed"/>
    </isoform>
    <isoform>
        <id>O57269-1</id>
        <name>NEP</name>
        <name>NS2</name>
        <sequence type="external"/>
    </isoform>
</comment>
<comment type="domain">
    <text evidence="1">The dsRNA-binding region is required for suppression of RNA silencing.</text>
</comment>
<comment type="PTM">
    <text evidence="1">Upon interferon induction, ISGylated via host HERC5; this results in the impairment of NS1 interaction with RNA targets due to its inability to form homodimers and to interact with host EIF2AK2/PKR.</text>
</comment>
<comment type="similarity">
    <text evidence="1">Belongs to the influenza A viruses NS1 family.</text>
</comment>
<keyword id="KW-0025">Alternative splicing</keyword>
<keyword id="KW-1262">Eukaryotic host gene expression shutoff by virus</keyword>
<keyword id="KW-1035">Host cytoplasm</keyword>
<keyword id="KW-1190">Host gene expression shutoff by virus</keyword>
<keyword id="KW-1192">Host mRNA suppression by virus</keyword>
<keyword id="KW-1048">Host nucleus</keyword>
<keyword id="KW-0945">Host-virus interaction</keyword>
<keyword id="KW-1090">Inhibition of host innate immune response by virus</keyword>
<keyword id="KW-1114">Inhibition of host interferon signaling pathway by virus</keyword>
<keyword id="KW-1102">Inhibition of host PKR by virus</keyword>
<keyword id="KW-1103">Inhibition of host pre-mRNA processing by virus</keyword>
<keyword id="KW-1088">Inhibition of host RIG-I by virus</keyword>
<keyword id="KW-1113">Inhibition of host RLR pathway by virus</keyword>
<keyword id="KW-0922">Interferon antiviral system evasion</keyword>
<keyword id="KW-0694">RNA-binding</keyword>
<keyword id="KW-0832">Ubl conjugation</keyword>
<keyword id="KW-0899">Viral immunoevasion</keyword>
<reference key="1">
    <citation type="submission" date="1997-04" db="EMBL/GenBank/DDBJ databases">
        <title>Comparison of avian influenza nonstructural gene sequences.</title>
        <authorList>
            <person name="Suarez D.L."/>
        </authorList>
    </citation>
    <scope>NUCLEOTIDE SEQUENCE [GENOMIC RNA]</scope>
</reference>
<reference key="2">
    <citation type="journal article" date="2006" name="Science">
        <title>Large-scale sequence analysis of avian influenza isolates.</title>
        <authorList>
            <person name="Obenauer J.C."/>
            <person name="Denson J."/>
            <person name="Mehta P.K."/>
            <person name="Su X."/>
            <person name="Mukatira S."/>
            <person name="Finkelstein D.B."/>
            <person name="Xu X."/>
            <person name="Wang J."/>
            <person name="Ma J."/>
            <person name="Fan Y."/>
            <person name="Rakestraw K.M."/>
            <person name="Webster R.G."/>
            <person name="Hoffmann E."/>
            <person name="Krauss S."/>
            <person name="Zheng J."/>
            <person name="Zhang Z."/>
            <person name="Naeve C.W."/>
        </authorList>
    </citation>
    <scope>NUCLEOTIDE SEQUENCE [GENOMIC RNA]</scope>
</reference>
<reference key="3">
    <citation type="journal article" date="2003" name="Virology">
        <title>Intracellular warfare between human influenza viruses and human cells: the roles of the viral NS1 protein.</title>
        <authorList>
            <person name="Krug R.M."/>
            <person name="Yuan W."/>
            <person name="Noah D.L."/>
            <person name="Latham A.G."/>
        </authorList>
    </citation>
    <scope>REVIEW</scope>
</reference>
<organismHost>
    <name type="scientific">Aves</name>
    <dbReference type="NCBI Taxonomy" id="8782"/>
</organismHost>